<dbReference type="EC" id="2.4.1.21" evidence="1"/>
<dbReference type="EMBL" id="FM180568">
    <property type="protein sequence ID" value="CAS11223.1"/>
    <property type="molecule type" value="Genomic_DNA"/>
</dbReference>
<dbReference type="RefSeq" id="WP_001197646.1">
    <property type="nucleotide sequence ID" value="NC_011601.1"/>
</dbReference>
<dbReference type="SMR" id="B7UKD4"/>
<dbReference type="CAZy" id="GT5">
    <property type="family name" value="Glycosyltransferase Family 5"/>
</dbReference>
<dbReference type="GeneID" id="75202274"/>
<dbReference type="KEGG" id="ecg:E2348C_3675"/>
<dbReference type="HOGENOM" id="CLU_009583_18_2_6"/>
<dbReference type="UniPathway" id="UPA00164"/>
<dbReference type="Proteomes" id="UP000008205">
    <property type="component" value="Chromosome"/>
</dbReference>
<dbReference type="GO" id="GO:0005829">
    <property type="term" value="C:cytosol"/>
    <property type="evidence" value="ECO:0007669"/>
    <property type="project" value="TreeGrafter"/>
</dbReference>
<dbReference type="GO" id="GO:0009011">
    <property type="term" value="F:alpha-1,4-glucan glucosyltransferase (ADP-glucose donor) activity"/>
    <property type="evidence" value="ECO:0007669"/>
    <property type="project" value="UniProtKB-UniRule"/>
</dbReference>
<dbReference type="GO" id="GO:0004373">
    <property type="term" value="F:alpha-1,4-glucan glucosyltransferase (UDP-glucose donor) activity"/>
    <property type="evidence" value="ECO:0007669"/>
    <property type="project" value="InterPro"/>
</dbReference>
<dbReference type="GO" id="GO:0005978">
    <property type="term" value="P:glycogen biosynthetic process"/>
    <property type="evidence" value="ECO:0007669"/>
    <property type="project" value="UniProtKB-UniRule"/>
</dbReference>
<dbReference type="CDD" id="cd03791">
    <property type="entry name" value="GT5_Glycogen_synthase_DULL1-like"/>
    <property type="match status" value="1"/>
</dbReference>
<dbReference type="FunFam" id="3.40.50.2000:FF:000008">
    <property type="entry name" value="Glycogen synthase"/>
    <property type="match status" value="1"/>
</dbReference>
<dbReference type="FunFam" id="3.40.50.2000:FF:000011">
    <property type="entry name" value="Glycogen synthase"/>
    <property type="match status" value="1"/>
</dbReference>
<dbReference type="Gene3D" id="3.40.50.2000">
    <property type="entry name" value="Glycogen Phosphorylase B"/>
    <property type="match status" value="2"/>
</dbReference>
<dbReference type="HAMAP" id="MF_00484">
    <property type="entry name" value="Glycogen_synth"/>
    <property type="match status" value="1"/>
</dbReference>
<dbReference type="InterPro" id="IPR001296">
    <property type="entry name" value="Glyco_trans_1"/>
</dbReference>
<dbReference type="InterPro" id="IPR011835">
    <property type="entry name" value="GS/SS"/>
</dbReference>
<dbReference type="InterPro" id="IPR013534">
    <property type="entry name" value="Starch_synth_cat_dom"/>
</dbReference>
<dbReference type="NCBIfam" id="TIGR02095">
    <property type="entry name" value="glgA"/>
    <property type="match status" value="1"/>
</dbReference>
<dbReference type="NCBIfam" id="NF001899">
    <property type="entry name" value="PRK00654.1-2"/>
    <property type="match status" value="1"/>
</dbReference>
<dbReference type="PANTHER" id="PTHR45825:SF11">
    <property type="entry name" value="ALPHA AMYLASE DOMAIN-CONTAINING PROTEIN"/>
    <property type="match status" value="1"/>
</dbReference>
<dbReference type="PANTHER" id="PTHR45825">
    <property type="entry name" value="GRANULE-BOUND STARCH SYNTHASE 1, CHLOROPLASTIC/AMYLOPLASTIC"/>
    <property type="match status" value="1"/>
</dbReference>
<dbReference type="Pfam" id="PF08323">
    <property type="entry name" value="Glyco_transf_5"/>
    <property type="match status" value="1"/>
</dbReference>
<dbReference type="Pfam" id="PF00534">
    <property type="entry name" value="Glycos_transf_1"/>
    <property type="match status" value="1"/>
</dbReference>
<dbReference type="SUPFAM" id="SSF53756">
    <property type="entry name" value="UDP-Glycosyltransferase/glycogen phosphorylase"/>
    <property type="match status" value="1"/>
</dbReference>
<name>GLGA_ECO27</name>
<protein>
    <recommendedName>
        <fullName evidence="1">Glycogen synthase</fullName>
        <ecNumber evidence="1">2.4.1.21</ecNumber>
    </recommendedName>
    <alternativeName>
        <fullName evidence="1">Starch [bacterial glycogen] synthase</fullName>
    </alternativeName>
</protein>
<comment type="function">
    <text evidence="1">Synthesizes alpha-1,4-glucan chains using ADP-glucose.</text>
</comment>
<comment type="catalytic activity">
    <reaction evidence="1">
        <text>[(1-&gt;4)-alpha-D-glucosyl](n) + ADP-alpha-D-glucose = [(1-&gt;4)-alpha-D-glucosyl](n+1) + ADP + H(+)</text>
        <dbReference type="Rhea" id="RHEA:18189"/>
        <dbReference type="Rhea" id="RHEA-COMP:9584"/>
        <dbReference type="Rhea" id="RHEA-COMP:9587"/>
        <dbReference type="ChEBI" id="CHEBI:15378"/>
        <dbReference type="ChEBI" id="CHEBI:15444"/>
        <dbReference type="ChEBI" id="CHEBI:57498"/>
        <dbReference type="ChEBI" id="CHEBI:456216"/>
        <dbReference type="EC" id="2.4.1.21"/>
    </reaction>
</comment>
<comment type="pathway">
    <text evidence="1">Glycan biosynthesis; glycogen biosynthesis.</text>
</comment>
<comment type="similarity">
    <text evidence="1">Belongs to the glycosyltransferase 1 family. Bacterial/plant glycogen synthase subfamily.</text>
</comment>
<feature type="chain" id="PRO_1000135648" description="Glycogen synthase">
    <location>
        <begin position="1"/>
        <end position="477"/>
    </location>
</feature>
<feature type="binding site" evidence="1">
    <location>
        <position position="15"/>
    </location>
    <ligand>
        <name>ADP-alpha-D-glucose</name>
        <dbReference type="ChEBI" id="CHEBI:57498"/>
    </ligand>
</feature>
<evidence type="ECO:0000255" key="1">
    <source>
        <dbReference type="HAMAP-Rule" id="MF_00484"/>
    </source>
</evidence>
<reference key="1">
    <citation type="journal article" date="2009" name="J. Bacteriol.">
        <title>Complete genome sequence and comparative genome analysis of enteropathogenic Escherichia coli O127:H6 strain E2348/69.</title>
        <authorList>
            <person name="Iguchi A."/>
            <person name="Thomson N.R."/>
            <person name="Ogura Y."/>
            <person name="Saunders D."/>
            <person name="Ooka T."/>
            <person name="Henderson I.R."/>
            <person name="Harris D."/>
            <person name="Asadulghani M."/>
            <person name="Kurokawa K."/>
            <person name="Dean P."/>
            <person name="Kenny B."/>
            <person name="Quail M.A."/>
            <person name="Thurston S."/>
            <person name="Dougan G."/>
            <person name="Hayashi T."/>
            <person name="Parkhill J."/>
            <person name="Frankel G."/>
        </authorList>
    </citation>
    <scope>NUCLEOTIDE SEQUENCE [LARGE SCALE GENOMIC DNA]</scope>
    <source>
        <strain>E2348/69 / EPEC</strain>
    </source>
</reference>
<sequence>MQVLHVCSEMFPLLKTGGLADVIGALPAAQIADGVDARVLLPAFPDIRRGVTDAQVVSRRDTFAGHITLLFGHYNGVGIYLIDAPHLYDRPGSPYHDTNLFAYTDNVLRFALLGWVGAEMASGLDPFWRPDVVHAHDWHAGLAPAYLAARGRPAKSVFTVHNLAYQGMFYAHHMNDIQLPWSFFNIHGLEFNGQISFLKAGLYYADHITAVSPTYAREITEPQFAYGMEGLLQQRHREGRLSGVLNGVDEKIWSPETDLLLASRYTRDTLEDKAENKRQLQIAMGLKVDDKVPLFAVVSRLTSQKGLDLVLEALPGLLEQGGQLALLGAGDPVLQEGFLAAAAEYPGQVGVQIGYHEAFSHRIMGGADVILVPSRFEPCGLTQLYGLKYGTLPLVRRTGGLADTVSDCSLENLADGVASGFVFEDSNAWSLLRAIRRAFVLWSRPSLWRFVQRQAMAMDFSWQVAAKSYRELYYRLK</sequence>
<proteinExistence type="inferred from homology"/>
<organism>
    <name type="scientific">Escherichia coli O127:H6 (strain E2348/69 / EPEC)</name>
    <dbReference type="NCBI Taxonomy" id="574521"/>
    <lineage>
        <taxon>Bacteria</taxon>
        <taxon>Pseudomonadati</taxon>
        <taxon>Pseudomonadota</taxon>
        <taxon>Gammaproteobacteria</taxon>
        <taxon>Enterobacterales</taxon>
        <taxon>Enterobacteriaceae</taxon>
        <taxon>Escherichia</taxon>
    </lineage>
</organism>
<keyword id="KW-0320">Glycogen biosynthesis</keyword>
<keyword id="KW-0328">Glycosyltransferase</keyword>
<keyword id="KW-1185">Reference proteome</keyword>
<keyword id="KW-0808">Transferase</keyword>
<gene>
    <name evidence="1" type="primary">glgA</name>
    <name type="ordered locus">E2348C_3675</name>
</gene>
<accession>B7UKD4</accession>